<reference key="1">
    <citation type="submission" date="2006-08" db="EMBL/GenBank/DDBJ databases">
        <title>Complete sequence of Alkalilimnicola ehrilichei MLHE-1.</title>
        <authorList>
            <person name="Copeland A."/>
            <person name="Lucas S."/>
            <person name="Lapidus A."/>
            <person name="Barry K."/>
            <person name="Detter J.C."/>
            <person name="Glavina del Rio T."/>
            <person name="Hammon N."/>
            <person name="Israni S."/>
            <person name="Dalin E."/>
            <person name="Tice H."/>
            <person name="Pitluck S."/>
            <person name="Sims D."/>
            <person name="Brettin T."/>
            <person name="Bruce D."/>
            <person name="Han C."/>
            <person name="Tapia R."/>
            <person name="Gilna P."/>
            <person name="Schmutz J."/>
            <person name="Larimer F."/>
            <person name="Land M."/>
            <person name="Hauser L."/>
            <person name="Kyrpides N."/>
            <person name="Mikhailova N."/>
            <person name="Oremland R.S."/>
            <person name="Hoeft S.E."/>
            <person name="Switzer-Blum J."/>
            <person name="Kulp T."/>
            <person name="King G."/>
            <person name="Tabita R."/>
            <person name="Witte B."/>
            <person name="Santini J.M."/>
            <person name="Basu P."/>
            <person name="Hollibaugh J.T."/>
            <person name="Xie G."/>
            <person name="Stolz J.F."/>
            <person name="Richardson P."/>
        </authorList>
    </citation>
    <scope>NUCLEOTIDE SEQUENCE [LARGE SCALE GENOMIC DNA]</scope>
    <source>
        <strain>ATCC BAA-1101 / DSM 17681 / MLHE-1</strain>
    </source>
</reference>
<accession>Q0A7D4</accession>
<protein>
    <recommendedName>
        <fullName evidence="1">SsrA-binding protein</fullName>
    </recommendedName>
    <alternativeName>
        <fullName evidence="1">Small protein B</fullName>
    </alternativeName>
</protein>
<evidence type="ECO:0000255" key="1">
    <source>
        <dbReference type="HAMAP-Rule" id="MF_00023"/>
    </source>
</evidence>
<evidence type="ECO:0000256" key="2">
    <source>
        <dbReference type="SAM" id="MobiDB-lite"/>
    </source>
</evidence>
<sequence length="160" mass="18446">MRAVSKKKKTPENVIALNRKARFEFHIEETMEAGLALEGWEVKSLRAGRVNLQEAYVLIRRGEAWLIGCTITPLPTASTHIKPDPTRTRRLLLHKKEIARLTGAADREGYTVVPLDLHWKRGKAKLSIGLAKGKKKHDKRADQKEQDWQRQKQRLMKHKV</sequence>
<comment type="function">
    <text evidence="1">Required for rescue of stalled ribosomes mediated by trans-translation. Binds to transfer-messenger RNA (tmRNA), required for stable association of tmRNA with ribosomes. tmRNA and SmpB together mimic tRNA shape, replacing the anticodon stem-loop with SmpB. tmRNA is encoded by the ssrA gene; the 2 termini fold to resemble tRNA(Ala) and it encodes a 'tag peptide', a short internal open reading frame. During trans-translation Ala-aminoacylated tmRNA acts like a tRNA, entering the A-site of stalled ribosomes, displacing the stalled mRNA. The ribosome then switches to translate the ORF on the tmRNA; the nascent peptide is terminated with the 'tag peptide' encoded by the tmRNA and targeted for degradation. The ribosome is freed to recommence translation, which seems to be the essential function of trans-translation.</text>
</comment>
<comment type="subcellular location">
    <subcellularLocation>
        <location evidence="1">Cytoplasm</location>
    </subcellularLocation>
    <text evidence="1">The tmRNA-SmpB complex associates with stalled 70S ribosomes.</text>
</comment>
<comment type="similarity">
    <text evidence="1">Belongs to the SmpB family.</text>
</comment>
<gene>
    <name evidence="1" type="primary">smpB</name>
    <name type="ordered locus">Mlg_1909</name>
</gene>
<name>SSRP_ALKEH</name>
<organism>
    <name type="scientific">Alkalilimnicola ehrlichii (strain ATCC BAA-1101 / DSM 17681 / MLHE-1)</name>
    <dbReference type="NCBI Taxonomy" id="187272"/>
    <lineage>
        <taxon>Bacteria</taxon>
        <taxon>Pseudomonadati</taxon>
        <taxon>Pseudomonadota</taxon>
        <taxon>Gammaproteobacteria</taxon>
        <taxon>Chromatiales</taxon>
        <taxon>Ectothiorhodospiraceae</taxon>
        <taxon>Alkalilimnicola</taxon>
    </lineage>
</organism>
<dbReference type="EMBL" id="CP000453">
    <property type="protein sequence ID" value="ABI57253.1"/>
    <property type="molecule type" value="Genomic_DNA"/>
</dbReference>
<dbReference type="SMR" id="Q0A7D4"/>
<dbReference type="KEGG" id="aeh:Mlg_1909"/>
<dbReference type="eggNOG" id="COG0691">
    <property type="taxonomic scope" value="Bacteria"/>
</dbReference>
<dbReference type="HOGENOM" id="CLU_108953_3_0_6"/>
<dbReference type="Proteomes" id="UP000001962">
    <property type="component" value="Chromosome"/>
</dbReference>
<dbReference type="GO" id="GO:0005829">
    <property type="term" value="C:cytosol"/>
    <property type="evidence" value="ECO:0007669"/>
    <property type="project" value="TreeGrafter"/>
</dbReference>
<dbReference type="GO" id="GO:0003723">
    <property type="term" value="F:RNA binding"/>
    <property type="evidence" value="ECO:0007669"/>
    <property type="project" value="UniProtKB-UniRule"/>
</dbReference>
<dbReference type="GO" id="GO:0070929">
    <property type="term" value="P:trans-translation"/>
    <property type="evidence" value="ECO:0007669"/>
    <property type="project" value="UniProtKB-UniRule"/>
</dbReference>
<dbReference type="CDD" id="cd09294">
    <property type="entry name" value="SmpB"/>
    <property type="match status" value="1"/>
</dbReference>
<dbReference type="Gene3D" id="2.40.280.10">
    <property type="match status" value="1"/>
</dbReference>
<dbReference type="HAMAP" id="MF_00023">
    <property type="entry name" value="SmpB"/>
    <property type="match status" value="1"/>
</dbReference>
<dbReference type="InterPro" id="IPR023620">
    <property type="entry name" value="SmpB"/>
</dbReference>
<dbReference type="InterPro" id="IPR000037">
    <property type="entry name" value="SsrA-bd_prot"/>
</dbReference>
<dbReference type="InterPro" id="IPR020081">
    <property type="entry name" value="SsrA-bd_prot_CS"/>
</dbReference>
<dbReference type="NCBIfam" id="NF003843">
    <property type="entry name" value="PRK05422.1"/>
    <property type="match status" value="1"/>
</dbReference>
<dbReference type="NCBIfam" id="TIGR00086">
    <property type="entry name" value="smpB"/>
    <property type="match status" value="1"/>
</dbReference>
<dbReference type="PANTHER" id="PTHR30308:SF2">
    <property type="entry name" value="SSRA-BINDING PROTEIN"/>
    <property type="match status" value="1"/>
</dbReference>
<dbReference type="PANTHER" id="PTHR30308">
    <property type="entry name" value="TMRNA-BINDING COMPONENT OF TRANS-TRANSLATION TAGGING COMPLEX"/>
    <property type="match status" value="1"/>
</dbReference>
<dbReference type="Pfam" id="PF01668">
    <property type="entry name" value="SmpB"/>
    <property type="match status" value="1"/>
</dbReference>
<dbReference type="SUPFAM" id="SSF74982">
    <property type="entry name" value="Small protein B (SmpB)"/>
    <property type="match status" value="1"/>
</dbReference>
<dbReference type="PROSITE" id="PS01317">
    <property type="entry name" value="SSRP"/>
    <property type="match status" value="1"/>
</dbReference>
<keyword id="KW-0963">Cytoplasm</keyword>
<keyword id="KW-1185">Reference proteome</keyword>
<keyword id="KW-0694">RNA-binding</keyword>
<proteinExistence type="inferred from homology"/>
<feature type="chain" id="PRO_0000331018" description="SsrA-binding protein">
    <location>
        <begin position="1"/>
        <end position="160"/>
    </location>
</feature>
<feature type="region of interest" description="Disordered" evidence="2">
    <location>
        <begin position="130"/>
        <end position="160"/>
    </location>
</feature>
<feature type="compositionally biased region" description="Basic and acidic residues" evidence="2">
    <location>
        <begin position="139"/>
        <end position="150"/>
    </location>
</feature>
<feature type="compositionally biased region" description="Basic residues" evidence="2">
    <location>
        <begin position="151"/>
        <end position="160"/>
    </location>
</feature>